<sequence length="463" mass="49761">MVAAAVAAAEQVVAALREECATPAARLDGVAAAMAGEMAAGLAEEGGSKIKMIVSYVDNLPNGTEEGLFYALDLGGTNFRVLRVQLAGKEKRVVKRESREVSIPPHLMSGNSSELFGFIASALAKFVADEGHNAVFNDRQRELGFTFSFPVRQTSIASGTLIKWTKAFSIDDAVGEDVVAELQMAMEKQGLDMRVSALINDTVGTLAAGSYYDEDIVVGVILGTGSNAAYLEKANAIPKLEGELPKSGNMVINTEWGNFSSSCLPITEYDEALDKESLNPGEQIFEKLISGMYLGEIVRRVLLKISLQSSIFGNLDQTKLKTRFILRTPDISVMHHDGTPDLRIVAEKLADNLKITDTSLETRKMVVEICDIVTRRSARLAAAGIVGILRKIGRGVPGDKRKSVIAIDGGLYEHYTEFRQCLETTLTELLGEEASKSVAVKLANDGSGLGAALIAAAHSQYLN</sequence>
<keyword id="KW-0067">ATP-binding</keyword>
<keyword id="KW-0963">Cytoplasm</keyword>
<keyword id="KW-0324">Glycolysis</keyword>
<keyword id="KW-0418">Kinase</keyword>
<keyword id="KW-0547">Nucleotide-binding</keyword>
<keyword id="KW-1185">Reference proteome</keyword>
<keyword id="KW-0808">Transferase</keyword>
<accession>Q1WM16</accession>
<accession>Q2KNB6</accession>
<accession>Q75KY7</accession>
<gene>
    <name type="primary">HXK7</name>
    <name type="synonym">HXK6</name>
    <name type="ordered locus">Os05g0187100</name>
    <name type="ordered locus">LOC_Os05g09500</name>
    <name type="ORF">OJ1097_A12.3</name>
</gene>
<proteinExistence type="evidence at protein level"/>
<evidence type="ECO:0000250" key="1">
    <source>
        <dbReference type="UniProtKB" id="Q8LQ68"/>
    </source>
</evidence>
<evidence type="ECO:0000255" key="2">
    <source>
        <dbReference type="PROSITE-ProRule" id="PRU01084"/>
    </source>
</evidence>
<evidence type="ECO:0000269" key="3">
    <source>
    </source>
</evidence>
<evidence type="ECO:0000269" key="4">
    <source>
    </source>
</evidence>
<evidence type="ECO:0000305" key="5"/>
<evidence type="ECO:0000305" key="6">
    <source>
    </source>
</evidence>
<feature type="chain" id="PRO_0000247570" description="Hexokinase-7">
    <location>
        <begin position="1"/>
        <end position="463"/>
    </location>
</feature>
<feature type="domain" description="Hexokinase" evidence="2">
    <location>
        <begin position="7"/>
        <end position="456"/>
    </location>
</feature>
<feature type="region of interest" description="Hexokinase small subdomain" evidence="2">
    <location>
        <begin position="62"/>
        <end position="199"/>
    </location>
</feature>
<feature type="region of interest" description="Hexokinase large subdomain" evidence="2">
    <location>
        <begin position="200"/>
        <end position="445"/>
    </location>
</feature>
<feature type="binding site" evidence="1">
    <location>
        <position position="76"/>
    </location>
    <ligand>
        <name>ADP</name>
        <dbReference type="ChEBI" id="CHEBI:456216"/>
    </ligand>
</feature>
<feature type="binding site" evidence="1">
    <location>
        <position position="77"/>
    </location>
    <ligand>
        <name>ADP</name>
        <dbReference type="ChEBI" id="CHEBI:456216"/>
    </ligand>
</feature>
<feature type="binding site" evidence="1">
    <location>
        <position position="78"/>
    </location>
    <ligand>
        <name>ADP</name>
        <dbReference type="ChEBI" id="CHEBI:456216"/>
    </ligand>
</feature>
<feature type="binding site" evidence="1">
    <location>
        <position position="165"/>
    </location>
    <ligand>
        <name>D-glucose</name>
        <dbReference type="ChEBI" id="CHEBI:4167"/>
    </ligand>
</feature>
<feature type="binding site" evidence="1">
    <location>
        <position position="166"/>
    </location>
    <ligand>
        <name>D-glucose</name>
        <dbReference type="ChEBI" id="CHEBI:4167"/>
    </ligand>
</feature>
<feature type="binding site" evidence="1">
    <location>
        <position position="200"/>
    </location>
    <ligand>
        <name>D-glucose</name>
        <dbReference type="ChEBI" id="CHEBI:4167"/>
    </ligand>
</feature>
<feature type="binding site" evidence="1">
    <location>
        <position position="201"/>
    </location>
    <ligand>
        <name>D-glucose</name>
        <dbReference type="ChEBI" id="CHEBI:4167"/>
    </ligand>
</feature>
<feature type="binding site" evidence="1">
    <location>
        <position position="224"/>
    </location>
    <ligand>
        <name>ADP</name>
        <dbReference type="ChEBI" id="CHEBI:456216"/>
    </ligand>
</feature>
<feature type="binding site" evidence="1">
    <location>
        <position position="227"/>
    </location>
    <ligand>
        <name>D-glucose</name>
        <dbReference type="ChEBI" id="CHEBI:4167"/>
    </ligand>
</feature>
<feature type="binding site" evidence="1">
    <location>
        <position position="255"/>
    </location>
    <ligand>
        <name>D-glucose</name>
        <dbReference type="ChEBI" id="CHEBI:4167"/>
    </ligand>
</feature>
<feature type="binding site" evidence="1">
    <location>
        <position position="286"/>
    </location>
    <ligand>
        <name>D-glucose</name>
        <dbReference type="ChEBI" id="CHEBI:4167"/>
    </ligand>
</feature>
<feature type="binding site" evidence="1">
    <location>
        <position position="410"/>
    </location>
    <ligand>
        <name>ADP</name>
        <dbReference type="ChEBI" id="CHEBI:456216"/>
    </ligand>
</feature>
<feature type="mutagenesis site" description="Abolishes glucose phosphorylation activity." evidence="4">
    <original>G</original>
    <variation>D</variation>
    <location>
        <position position="76"/>
    </location>
</feature>
<feature type="mutagenesis site" description="Abolishes glucose phosphorylation activity." evidence="4">
    <original>S</original>
    <variation>A</variation>
    <location>
        <position position="148"/>
    </location>
</feature>
<feature type="sequence conflict" description="In Ref. 1; AAZ93624." evidence="5" ref="1">
    <original>I</original>
    <variation>T</variation>
    <location>
        <position position="199"/>
    </location>
</feature>
<comment type="function">
    <text evidence="3 4">Fructose and glucose phosphorylating enzyme (PubMed:16552590). Functions in sugar signaling via a glycolysis-dependent manner under aerobic conditions, but its signaling role is suppressed when oxygen is deficient (PubMed:25951042).</text>
</comment>
<comment type="catalytic activity">
    <reaction evidence="6">
        <text>a D-hexose + ATP = a D-hexose 6-phosphate + ADP + H(+)</text>
        <dbReference type="Rhea" id="RHEA:22740"/>
        <dbReference type="ChEBI" id="CHEBI:4194"/>
        <dbReference type="ChEBI" id="CHEBI:15378"/>
        <dbReference type="ChEBI" id="CHEBI:30616"/>
        <dbReference type="ChEBI" id="CHEBI:229467"/>
        <dbReference type="ChEBI" id="CHEBI:456216"/>
        <dbReference type="EC" id="2.7.1.1"/>
    </reaction>
    <physiologicalReaction direction="left-to-right" evidence="6">
        <dbReference type="Rhea" id="RHEA:22741"/>
    </physiologicalReaction>
</comment>
<comment type="catalytic activity">
    <reaction evidence="6">
        <text>D-fructose + ATP = D-fructose 6-phosphate + ADP + H(+)</text>
        <dbReference type="Rhea" id="RHEA:16125"/>
        <dbReference type="ChEBI" id="CHEBI:15378"/>
        <dbReference type="ChEBI" id="CHEBI:30616"/>
        <dbReference type="ChEBI" id="CHEBI:37721"/>
        <dbReference type="ChEBI" id="CHEBI:61527"/>
        <dbReference type="ChEBI" id="CHEBI:456216"/>
        <dbReference type="EC" id="2.7.1.1"/>
    </reaction>
    <physiologicalReaction direction="left-to-right" evidence="6">
        <dbReference type="Rhea" id="RHEA:16126"/>
    </physiologicalReaction>
</comment>
<comment type="catalytic activity">
    <reaction evidence="6">
        <text>D-glucose + ATP = D-glucose 6-phosphate + ADP + H(+)</text>
        <dbReference type="Rhea" id="RHEA:17825"/>
        <dbReference type="ChEBI" id="CHEBI:4167"/>
        <dbReference type="ChEBI" id="CHEBI:15378"/>
        <dbReference type="ChEBI" id="CHEBI:30616"/>
        <dbReference type="ChEBI" id="CHEBI:61548"/>
        <dbReference type="ChEBI" id="CHEBI:456216"/>
        <dbReference type="EC" id="2.7.1.1"/>
    </reaction>
    <physiologicalReaction direction="left-to-right" evidence="6">
        <dbReference type="Rhea" id="RHEA:17826"/>
    </physiologicalReaction>
</comment>
<comment type="pathway">
    <text evidence="6">Carbohydrate metabolism; hexose metabolism.</text>
</comment>
<comment type="pathway">
    <text evidence="6">Carbohydrate degradation; glycolysis; D-glyceraldehyde 3-phosphate and glycerone phosphate from D-glucose: step 1/4.</text>
</comment>
<comment type="subcellular location">
    <subcellularLocation>
        <location evidence="6">Cytoplasm</location>
    </subcellularLocation>
</comment>
<comment type="tissue specificity">
    <text evidence="3">Expressed in roots, leaves, flowers, immature seeds and seed coat.</text>
</comment>
<comment type="developmental stage">
    <text evidence="3">Expressed during flower development until 15 days after flowering.</text>
</comment>
<comment type="induction">
    <text evidence="3">Down-regulated by glucose or fructose treatment in leaves and immature seeds.</text>
</comment>
<comment type="similarity">
    <text evidence="2 5">Belongs to the hexokinase family.</text>
</comment>
<comment type="sequence caution" evidence="5">
    <conflict type="erroneous gene model prediction">
        <sequence resource="EMBL-CDS" id="AAS86398"/>
    </conflict>
</comment>
<name>HXK7_ORYSJ</name>
<dbReference type="EC" id="2.7.1.1" evidence="6"/>
<dbReference type="EMBL" id="DQ116389">
    <property type="protein sequence ID" value="AAZ93624.1"/>
    <property type="molecule type" value="mRNA"/>
</dbReference>
<dbReference type="EMBL" id="AY884169">
    <property type="protein sequence ID" value="AAX68422.1"/>
    <property type="molecule type" value="mRNA"/>
</dbReference>
<dbReference type="EMBL" id="AC093954">
    <property type="protein sequence ID" value="AAS86398.2"/>
    <property type="status" value="ALT_SEQ"/>
    <property type="molecule type" value="Genomic_DNA"/>
</dbReference>
<dbReference type="EMBL" id="AP014961">
    <property type="status" value="NOT_ANNOTATED_CDS"/>
    <property type="molecule type" value="Genomic_DNA"/>
</dbReference>
<dbReference type="RefSeq" id="XP_015637554.1">
    <property type="nucleotide sequence ID" value="XM_015782068.1"/>
</dbReference>
<dbReference type="SMR" id="Q1WM16"/>
<dbReference type="FunCoup" id="Q1WM16">
    <property type="interactions" value="1424"/>
</dbReference>
<dbReference type="STRING" id="39947.Q1WM16"/>
<dbReference type="PaxDb" id="39947-Q1WM16"/>
<dbReference type="EnsemblPlants" id="Os05t0187100-02">
    <property type="protein sequence ID" value="Os05t0187100-02"/>
    <property type="gene ID" value="Os05g0187100"/>
</dbReference>
<dbReference type="Gramene" id="Os05t0187100-02">
    <property type="protein sequence ID" value="Os05t0187100-02"/>
    <property type="gene ID" value="Os05g0187100"/>
</dbReference>
<dbReference type="eggNOG" id="KOG1369">
    <property type="taxonomic scope" value="Eukaryota"/>
</dbReference>
<dbReference type="InParanoid" id="Q1WM16"/>
<dbReference type="OrthoDB" id="419537at2759"/>
<dbReference type="BRENDA" id="2.7.1.1">
    <property type="organism ID" value="4460"/>
</dbReference>
<dbReference type="UniPathway" id="UPA00109">
    <property type="reaction ID" value="UER00180"/>
</dbReference>
<dbReference type="UniPathway" id="UPA00242"/>
<dbReference type="Proteomes" id="UP000000763">
    <property type="component" value="Chromosome 5"/>
</dbReference>
<dbReference type="Proteomes" id="UP000059680">
    <property type="component" value="Chromosome 5"/>
</dbReference>
<dbReference type="ExpressionAtlas" id="Q1WM16">
    <property type="expression patterns" value="baseline and differential"/>
</dbReference>
<dbReference type="GO" id="GO:0005829">
    <property type="term" value="C:cytosol"/>
    <property type="evidence" value="ECO:0000318"/>
    <property type="project" value="GO_Central"/>
</dbReference>
<dbReference type="GO" id="GO:0005739">
    <property type="term" value="C:mitochondrion"/>
    <property type="evidence" value="ECO:0000318"/>
    <property type="project" value="GO_Central"/>
</dbReference>
<dbReference type="GO" id="GO:0005524">
    <property type="term" value="F:ATP binding"/>
    <property type="evidence" value="ECO:0007669"/>
    <property type="project" value="UniProtKB-KW"/>
</dbReference>
<dbReference type="GO" id="GO:0005536">
    <property type="term" value="F:D-glucose binding"/>
    <property type="evidence" value="ECO:0007669"/>
    <property type="project" value="InterPro"/>
</dbReference>
<dbReference type="GO" id="GO:0008865">
    <property type="term" value="F:fructokinase activity"/>
    <property type="evidence" value="ECO:0000318"/>
    <property type="project" value="GO_Central"/>
</dbReference>
<dbReference type="GO" id="GO:0004340">
    <property type="term" value="F:glucokinase activity"/>
    <property type="evidence" value="ECO:0000318"/>
    <property type="project" value="GO_Central"/>
</dbReference>
<dbReference type="GO" id="GO:0051156">
    <property type="term" value="P:glucose 6-phosphate metabolic process"/>
    <property type="evidence" value="ECO:0000318"/>
    <property type="project" value="GO_Central"/>
</dbReference>
<dbReference type="GO" id="GO:0006006">
    <property type="term" value="P:glucose metabolic process"/>
    <property type="evidence" value="ECO:0000318"/>
    <property type="project" value="GO_Central"/>
</dbReference>
<dbReference type="GO" id="GO:0006096">
    <property type="term" value="P:glycolytic process"/>
    <property type="evidence" value="ECO:0000318"/>
    <property type="project" value="GO_Central"/>
</dbReference>
<dbReference type="GO" id="GO:0001678">
    <property type="term" value="P:intracellular glucose homeostasis"/>
    <property type="evidence" value="ECO:0000318"/>
    <property type="project" value="GO_Central"/>
</dbReference>
<dbReference type="CDD" id="cd24020">
    <property type="entry name" value="ASKHA_NBD_HK_plant"/>
    <property type="match status" value="1"/>
</dbReference>
<dbReference type="FunFam" id="3.30.420.40:FF:000034">
    <property type="entry name" value="Phosphotransferase"/>
    <property type="match status" value="1"/>
</dbReference>
<dbReference type="FunFam" id="3.40.367.20:FF:000003">
    <property type="entry name" value="Phosphotransferase"/>
    <property type="match status" value="1"/>
</dbReference>
<dbReference type="Gene3D" id="3.30.420.40">
    <property type="match status" value="1"/>
</dbReference>
<dbReference type="Gene3D" id="3.40.367.20">
    <property type="match status" value="1"/>
</dbReference>
<dbReference type="InterPro" id="IPR043129">
    <property type="entry name" value="ATPase_NBD"/>
</dbReference>
<dbReference type="InterPro" id="IPR001312">
    <property type="entry name" value="Hexokinase"/>
</dbReference>
<dbReference type="InterPro" id="IPR022673">
    <property type="entry name" value="Hexokinase_C"/>
</dbReference>
<dbReference type="InterPro" id="IPR022672">
    <property type="entry name" value="Hexokinase_N"/>
</dbReference>
<dbReference type="PANTHER" id="PTHR19443">
    <property type="entry name" value="HEXOKINASE"/>
    <property type="match status" value="1"/>
</dbReference>
<dbReference type="PANTHER" id="PTHR19443:SF87">
    <property type="entry name" value="HEXOKINASE-7"/>
    <property type="match status" value="1"/>
</dbReference>
<dbReference type="Pfam" id="PF00349">
    <property type="entry name" value="Hexokinase_1"/>
    <property type="match status" value="1"/>
</dbReference>
<dbReference type="Pfam" id="PF03727">
    <property type="entry name" value="Hexokinase_2"/>
    <property type="match status" value="1"/>
</dbReference>
<dbReference type="PRINTS" id="PR00475">
    <property type="entry name" value="HEXOKINASE"/>
</dbReference>
<dbReference type="SUPFAM" id="SSF53067">
    <property type="entry name" value="Actin-like ATPase domain"/>
    <property type="match status" value="2"/>
</dbReference>
<dbReference type="PROSITE" id="PS51748">
    <property type="entry name" value="HEXOKINASE_2"/>
    <property type="match status" value="1"/>
</dbReference>
<organism>
    <name type="scientific">Oryza sativa subsp. japonica</name>
    <name type="common">Rice</name>
    <dbReference type="NCBI Taxonomy" id="39947"/>
    <lineage>
        <taxon>Eukaryota</taxon>
        <taxon>Viridiplantae</taxon>
        <taxon>Streptophyta</taxon>
        <taxon>Embryophyta</taxon>
        <taxon>Tracheophyta</taxon>
        <taxon>Spermatophyta</taxon>
        <taxon>Magnoliopsida</taxon>
        <taxon>Liliopsida</taxon>
        <taxon>Poales</taxon>
        <taxon>Poaceae</taxon>
        <taxon>BOP clade</taxon>
        <taxon>Oryzoideae</taxon>
        <taxon>Oryzeae</taxon>
        <taxon>Oryzinae</taxon>
        <taxon>Oryza</taxon>
        <taxon>Oryza sativa</taxon>
    </lineage>
</organism>
<reference key="1">
    <citation type="journal article" date="2006" name="Planta">
        <title>Structure, expression, and functional analysis of the hexokinase gene family in rice (Oryza sativa L.).</title>
        <authorList>
            <person name="Cho J.-I."/>
            <person name="Ryoo N."/>
            <person name="Ko S."/>
            <person name="Lee S.-K."/>
            <person name="Lee J."/>
            <person name="Jung K.-H."/>
            <person name="Lee Y.-H."/>
            <person name="Bhoo S.H."/>
            <person name="Winderickx J."/>
            <person name="An G."/>
            <person name="Hahn T.-R."/>
            <person name="Jeon J.-S."/>
        </authorList>
    </citation>
    <scope>NUCLEOTIDE SEQUENCE [MRNA]</scope>
    <scope>FUNCTION</scope>
    <scope>SUBCELLULAR LOCATION</scope>
    <scope>TISSUE SPECIFICITY</scope>
    <scope>DEVELOPMENTAL STAGE</scope>
    <scope>INDUCTION</scope>
    <scope>NOMENCLATURE</scope>
    <source>
        <strain>cv. Jinmi</strain>
    </source>
</reference>
<reference key="2">
    <citation type="submission" date="2005-01" db="EMBL/GenBank/DDBJ databases">
        <title>The hexokinase gene family in rice.</title>
        <authorList>
            <person name="Wang Y.D."/>
            <person name="Cheng W."/>
            <person name="Wang X.S."/>
            <person name="Zhou X.J."/>
        </authorList>
    </citation>
    <scope>NUCLEOTIDE SEQUENCE [MRNA]</scope>
    <source>
        <strain>cv. Zhonghua 15</strain>
        <tissue>Flower</tissue>
    </source>
</reference>
<reference key="3">
    <citation type="journal article" date="2005" name="Mol. Genet. Genomics">
        <title>A fine physical map of the rice chromosome 5.</title>
        <authorList>
            <person name="Cheng C.-H."/>
            <person name="Chung M.C."/>
            <person name="Liu S.-M."/>
            <person name="Chen S.-K."/>
            <person name="Kao F.Y."/>
            <person name="Lin S.-J."/>
            <person name="Hsiao S.-H."/>
            <person name="Tseng I.C."/>
            <person name="Hsing Y.-I.C."/>
            <person name="Wu H.-P."/>
            <person name="Chen C.-S."/>
            <person name="Shaw J.-F."/>
            <person name="Wu J."/>
            <person name="Matsumoto T."/>
            <person name="Sasaki T."/>
            <person name="Chen H.-C."/>
            <person name="Chow T.-Y."/>
        </authorList>
    </citation>
    <scope>NUCLEOTIDE SEQUENCE [LARGE SCALE GENOMIC DNA]</scope>
    <source>
        <strain>cv. Nipponbare</strain>
    </source>
</reference>
<reference key="4">
    <citation type="journal article" date="2005" name="Nature">
        <title>The map-based sequence of the rice genome.</title>
        <authorList>
            <consortium name="International rice genome sequencing project (IRGSP)"/>
        </authorList>
    </citation>
    <scope>NUCLEOTIDE SEQUENCE [LARGE SCALE GENOMIC DNA]</scope>
    <source>
        <strain>cv. Nipponbare</strain>
    </source>
</reference>
<reference key="5">
    <citation type="journal article" date="2013" name="Rice">
        <title>Improvement of the Oryza sativa Nipponbare reference genome using next generation sequence and optical map data.</title>
        <authorList>
            <person name="Kawahara Y."/>
            <person name="de la Bastide M."/>
            <person name="Hamilton J.P."/>
            <person name="Kanamori H."/>
            <person name="McCombie W.R."/>
            <person name="Ouyang S."/>
            <person name="Schwartz D.C."/>
            <person name="Tanaka T."/>
            <person name="Wu J."/>
            <person name="Zhou S."/>
            <person name="Childs K.L."/>
            <person name="Davidson R.M."/>
            <person name="Lin H."/>
            <person name="Quesada-Ocampo L."/>
            <person name="Vaillancourt B."/>
            <person name="Sakai H."/>
            <person name="Lee S.S."/>
            <person name="Kim J."/>
            <person name="Numa H."/>
            <person name="Itoh T."/>
            <person name="Buell C.R."/>
            <person name="Matsumoto T."/>
        </authorList>
    </citation>
    <scope>GENOME REANNOTATION</scope>
    <source>
        <strain>cv. Nipponbare</strain>
    </source>
</reference>
<reference key="6">
    <citation type="journal article" date="2016" name="J. Integr. Plant Biol.">
        <title>Role of rice cytosolic hexokinase OsHXK7 in sugar signaling and metabolism.</title>
        <authorList>
            <person name="Kim H.B."/>
            <person name="Cho J.I."/>
            <person name="Ryoo N."/>
            <person name="Shin D.H."/>
            <person name="Park Y.I."/>
            <person name="Hwang Y.S."/>
            <person name="Lee S.K."/>
            <person name="An G."/>
            <person name="Jeon J.S."/>
        </authorList>
    </citation>
    <scope>FUNCTION</scope>
    <scope>MUTAGENESIS OF GLY-76 AND SER-148</scope>
</reference>
<protein>
    <recommendedName>
        <fullName>Hexokinase-7</fullName>
        <ecNumber evidence="6">2.7.1.1</ecNumber>
    </recommendedName>
    <alternativeName>
        <fullName>Hexokinase-6</fullName>
    </alternativeName>
</protein>